<name>Y1102_STAES</name>
<accession>Q8CSL5</accession>
<protein>
    <recommendedName>
        <fullName>Uncharacterized HTH-type transcriptional regulator SE_1102</fullName>
    </recommendedName>
</protein>
<keyword id="KW-0238">DNA-binding</keyword>
<keyword id="KW-0804">Transcription</keyword>
<keyword id="KW-0805">Transcription regulation</keyword>
<feature type="chain" id="PRO_0000050281" description="Uncharacterized HTH-type transcriptional regulator SE_1102">
    <location>
        <begin position="1"/>
        <end position="255"/>
    </location>
</feature>
<feature type="domain" description="HTH deoR-type" evidence="1">
    <location>
        <begin position="4"/>
        <end position="59"/>
    </location>
</feature>
<feature type="DNA-binding region" description="H-T-H motif" evidence="1">
    <location>
        <begin position="21"/>
        <end position="40"/>
    </location>
</feature>
<proteinExistence type="predicted"/>
<evidence type="ECO:0000255" key="1">
    <source>
        <dbReference type="PROSITE-ProRule" id="PRU00349"/>
    </source>
</evidence>
<reference key="1">
    <citation type="journal article" date="2003" name="Mol. Microbiol.">
        <title>Genome-based analysis of virulence genes in a non-biofilm-forming Staphylococcus epidermidis strain (ATCC 12228).</title>
        <authorList>
            <person name="Zhang Y.-Q."/>
            <person name="Ren S.-X."/>
            <person name="Li H.-L."/>
            <person name="Wang Y.-X."/>
            <person name="Fu G."/>
            <person name="Yang J."/>
            <person name="Qin Z.-Q."/>
            <person name="Miao Y.-G."/>
            <person name="Wang W.-Y."/>
            <person name="Chen R.-S."/>
            <person name="Shen Y."/>
            <person name="Chen Z."/>
            <person name="Yuan Z.-H."/>
            <person name="Zhao G.-P."/>
            <person name="Qu D."/>
            <person name="Danchin A."/>
            <person name="Wen Y.-M."/>
        </authorList>
    </citation>
    <scope>NUCLEOTIDE SEQUENCE [LARGE SCALE GENOMIC DNA]</scope>
    <source>
        <strain>ATCC 12228 / FDA PCI 1200</strain>
    </source>
</reference>
<organism>
    <name type="scientific">Staphylococcus epidermidis (strain ATCC 12228 / FDA PCI 1200)</name>
    <dbReference type="NCBI Taxonomy" id="176280"/>
    <lineage>
        <taxon>Bacteria</taxon>
        <taxon>Bacillati</taxon>
        <taxon>Bacillota</taxon>
        <taxon>Bacilli</taxon>
        <taxon>Bacillales</taxon>
        <taxon>Staphylococcaceae</taxon>
        <taxon>Staphylococcus</taxon>
    </lineage>
</organism>
<dbReference type="EMBL" id="AE015929">
    <property type="protein sequence ID" value="AAO04699.1"/>
    <property type="molecule type" value="Genomic_DNA"/>
</dbReference>
<dbReference type="RefSeq" id="NP_764657.1">
    <property type="nucleotide sequence ID" value="NC_004461.1"/>
</dbReference>
<dbReference type="RefSeq" id="WP_001831263.1">
    <property type="nucleotide sequence ID" value="NZ_WBME01000002.1"/>
</dbReference>
<dbReference type="SMR" id="Q8CSL5"/>
<dbReference type="DNASU" id="1057481"/>
<dbReference type="KEGG" id="sep:SE_1102"/>
<dbReference type="PATRIC" id="fig|176280.10.peg.1076"/>
<dbReference type="eggNOG" id="COG1349">
    <property type="taxonomic scope" value="Bacteria"/>
</dbReference>
<dbReference type="HOGENOM" id="CLU_060699_0_1_9"/>
<dbReference type="OrthoDB" id="9797223at2"/>
<dbReference type="Proteomes" id="UP000001411">
    <property type="component" value="Chromosome"/>
</dbReference>
<dbReference type="GO" id="GO:0003677">
    <property type="term" value="F:DNA binding"/>
    <property type="evidence" value="ECO:0007669"/>
    <property type="project" value="UniProtKB-KW"/>
</dbReference>
<dbReference type="GO" id="GO:0003700">
    <property type="term" value="F:DNA-binding transcription factor activity"/>
    <property type="evidence" value="ECO:0007669"/>
    <property type="project" value="InterPro"/>
</dbReference>
<dbReference type="Gene3D" id="3.40.50.1360">
    <property type="match status" value="1"/>
</dbReference>
<dbReference type="InterPro" id="IPR050313">
    <property type="entry name" value="Carb_Metab_HTH_regulators"/>
</dbReference>
<dbReference type="InterPro" id="IPR014036">
    <property type="entry name" value="DeoR-like_C"/>
</dbReference>
<dbReference type="InterPro" id="IPR001034">
    <property type="entry name" value="DeoR_HTH"/>
</dbReference>
<dbReference type="InterPro" id="IPR037171">
    <property type="entry name" value="NagB/RpiA_transferase-like"/>
</dbReference>
<dbReference type="InterPro" id="IPR018356">
    <property type="entry name" value="Tscrpt_reg_HTH_DeoR_CS"/>
</dbReference>
<dbReference type="InterPro" id="IPR036390">
    <property type="entry name" value="WH_DNA-bd_sf"/>
</dbReference>
<dbReference type="PANTHER" id="PTHR30363:SF44">
    <property type="entry name" value="AGA OPERON TRANSCRIPTIONAL REPRESSOR-RELATED"/>
    <property type="match status" value="1"/>
</dbReference>
<dbReference type="PANTHER" id="PTHR30363">
    <property type="entry name" value="HTH-TYPE TRANSCRIPTIONAL REGULATOR SRLR-RELATED"/>
    <property type="match status" value="1"/>
</dbReference>
<dbReference type="Pfam" id="PF00455">
    <property type="entry name" value="DeoRC"/>
    <property type="match status" value="1"/>
</dbReference>
<dbReference type="Pfam" id="PF08220">
    <property type="entry name" value="HTH_DeoR"/>
    <property type="match status" value="1"/>
</dbReference>
<dbReference type="PRINTS" id="PR00037">
    <property type="entry name" value="HTHLACR"/>
</dbReference>
<dbReference type="SMART" id="SM01134">
    <property type="entry name" value="DeoRC"/>
    <property type="match status" value="1"/>
</dbReference>
<dbReference type="SMART" id="SM00420">
    <property type="entry name" value="HTH_DEOR"/>
    <property type="match status" value="1"/>
</dbReference>
<dbReference type="SUPFAM" id="SSF100950">
    <property type="entry name" value="NagB/RpiA/CoA transferase-like"/>
    <property type="match status" value="1"/>
</dbReference>
<dbReference type="SUPFAM" id="SSF46785">
    <property type="entry name" value="Winged helix' DNA-binding domain"/>
    <property type="match status" value="1"/>
</dbReference>
<dbReference type="PROSITE" id="PS00894">
    <property type="entry name" value="HTH_DEOR_1"/>
    <property type="match status" value="1"/>
</dbReference>
<dbReference type="PROSITE" id="PS51000">
    <property type="entry name" value="HTH_DEOR_2"/>
    <property type="match status" value="1"/>
</dbReference>
<sequence length="255" mass="29453">MYKRNERLNLIRKRVDQYGQVAVKDLAIFLQVTPETVRKDLETLENDKLITRTHGGAIQYNHINKEKSYANKWQKQSQVKERIAKKAALQIKSGEIIVIDGGTTTGRIPQYLNDITQTTIVTNSLKIADELNRAIEEQRIQAEVIMLAGKTNTEQDVVRGHMTNELLQRFKFDKAFISCGSFDTSDCYEFDLEEAHASHIMIQKSQLSYLLADSSKRDAHASYRIDGFSEIDYMISDYAKPQNIEYFNQKHWLQI</sequence>
<gene>
    <name type="ordered locus">SE_1102</name>
</gene>